<sequence length="82" mass="8856">MKVAILFLSILVLAVASESIEESRDDFAVEELGRATCAGQDQTCKVTCDCCGERGECVCGGPCICRQGNFLIAWYKLASCKK</sequence>
<feature type="signal peptide" evidence="1">
    <location>
        <begin position="1"/>
        <end position="17"/>
    </location>
</feature>
<feature type="propeptide" id="PRO_0000035504" evidence="2 4 5 6">
    <location>
        <begin position="18"/>
        <end position="34"/>
    </location>
</feature>
<feature type="chain" id="PRO_0000035505" description="Delta-ctenitoxin-Pn2c" evidence="2 6">
    <location>
        <begin position="35"/>
        <end position="82"/>
    </location>
</feature>
<feature type="disulfide bond" evidence="10">
    <location>
        <begin position="37"/>
        <end position="51"/>
    </location>
</feature>
<feature type="disulfide bond" evidence="10">
    <location>
        <begin position="44"/>
        <end position="57"/>
    </location>
</feature>
<feature type="disulfide bond" evidence="10">
    <location>
        <begin position="48"/>
        <end position="80"/>
    </location>
</feature>
<feature type="disulfide bond" evidence="10">
    <location>
        <begin position="50"/>
        <end position="65"/>
    </location>
</feature>
<feature type="disulfide bond" evidence="10">
    <location>
        <begin position="59"/>
        <end position="63"/>
    </location>
</feature>
<feature type="sequence conflict" description="In Ref. 2; AA sequence and 4; AA sequence." evidence="10" ref="2 4">
    <original>W</original>
    <variation>A</variation>
    <location>
        <position position="74"/>
    </location>
</feature>
<feature type="sequence conflict" description="In Ref. 2; AA sequence." evidence="10" ref="2">
    <original>K</original>
    <variation>KC</variation>
    <location>
        <position position="81"/>
    </location>
</feature>
<dbReference type="EMBL" id="AF014463">
    <property type="protein sequence ID" value="AAC26165.1"/>
    <property type="molecule type" value="mRNA"/>
</dbReference>
<dbReference type="PIR" id="S29215">
    <property type="entry name" value="S29215"/>
</dbReference>
<dbReference type="SMR" id="O76199"/>
<dbReference type="TCDB" id="8.B.12.1.1">
    <property type="family name" value="the spider toxin (stx2) family"/>
</dbReference>
<dbReference type="ArachnoServer" id="AS000242">
    <property type="toxin name" value="delta-ctenitoxin-Pn2b"/>
</dbReference>
<dbReference type="ArachnoServer" id="AS000241">
    <property type="toxin name" value="delta-ctenitoxin-Pn2c"/>
</dbReference>
<dbReference type="GO" id="GO:0005576">
    <property type="term" value="C:extracellular region"/>
    <property type="evidence" value="ECO:0007669"/>
    <property type="project" value="UniProtKB-SubCell"/>
</dbReference>
<dbReference type="GO" id="GO:0017080">
    <property type="term" value="F:sodium channel regulator activity"/>
    <property type="evidence" value="ECO:0007669"/>
    <property type="project" value="UniProtKB-KW"/>
</dbReference>
<dbReference type="GO" id="GO:0090729">
    <property type="term" value="F:toxin activity"/>
    <property type="evidence" value="ECO:0007669"/>
    <property type="project" value="UniProtKB-KW"/>
</dbReference>
<dbReference type="InterPro" id="IPR035285">
    <property type="entry name" value="CNTX"/>
</dbReference>
<dbReference type="Pfam" id="PF17492">
    <property type="entry name" value="D_CNTX"/>
    <property type="match status" value="1"/>
</dbReference>
<name>TX36B_PHONI</name>
<evidence type="ECO:0000255" key="1"/>
<evidence type="ECO:0000269" key="2">
    <source>
    </source>
</evidence>
<evidence type="ECO:0000269" key="3">
    <source>
    </source>
</evidence>
<evidence type="ECO:0000269" key="4">
    <source>
    </source>
</evidence>
<evidence type="ECO:0000269" key="5">
    <source>
    </source>
</evidence>
<evidence type="ECO:0000269" key="6">
    <source>
    </source>
</evidence>
<evidence type="ECO:0000303" key="7">
    <source>
    </source>
</evidence>
<evidence type="ECO:0000303" key="8">
    <source>
    </source>
</evidence>
<evidence type="ECO:0000303" key="9">
    <source>
    </source>
</evidence>
<evidence type="ECO:0000305" key="10"/>
<evidence type="ECO:0000305" key="11">
    <source>
    </source>
</evidence>
<evidence type="ECO:0000305" key="12">
    <source>
    </source>
</evidence>
<evidence type="ECO:0000305" key="13">
    <source>
    </source>
</evidence>
<organism>
    <name type="scientific">Phoneutria nigriventer</name>
    <name type="common">Brazilian armed spider</name>
    <name type="synonym">Ctenus nigriventer</name>
    <dbReference type="NCBI Taxonomy" id="6918"/>
    <lineage>
        <taxon>Eukaryota</taxon>
        <taxon>Metazoa</taxon>
        <taxon>Ecdysozoa</taxon>
        <taxon>Arthropoda</taxon>
        <taxon>Chelicerata</taxon>
        <taxon>Arachnida</taxon>
        <taxon>Araneae</taxon>
        <taxon>Araneomorphae</taxon>
        <taxon>Entelegynae</taxon>
        <taxon>Lycosoidea</taxon>
        <taxon>Ctenidae</taxon>
        <taxon>Phoneutria</taxon>
    </lineage>
</organism>
<accession>O76199</accession>
<accession>P29424</accession>
<comment type="function">
    <text evidence="2 3 4 6">Reversible inhibitor of voltage-gated sodium channels (Nav). Delays the fast inactivation kinetics of neuronal-type sodium channels. In vivo, it induces rat penile erection (PubMed:15246765). This effect may be due to the neuronal nitric oxide synthase (NOS1), since one of its selective inhibitor completely abolishes all the toxic effects of the toxin (PubMed:15246765). This toxin also causes scratching, lacrimation, hypersalivation, sweating and agitation followed by spastic paralysis of the anterior and posterior extremities and death at dose levels of 0.24 mg/mouse (PubMed:1397265, PubMed:15246765, PubMed:16278100). It is also insecticidal to the larval and adult forms of the house fly (PubMed:1397265).</text>
</comment>
<comment type="subcellular location">
    <subcellularLocation>
        <location evidence="2 4 6">Secreted</location>
    </subcellularLocation>
</comment>
<comment type="tissue specificity">
    <text evidence="11 12 13">Expressed by the venom gland.</text>
</comment>
<comment type="domain">
    <text evidence="10">The presence of a 'disulfide through disulfide knot' structurally defines this protein as a knottin.</text>
</comment>
<comment type="mass spectrometry" mass="5116.6" method="Unknown" evidence="4"/>
<comment type="mass spectrometry" mass="5112.31" error="0.41" method="Electrospray" evidence="6"/>
<comment type="similarity">
    <text evidence="10">Belongs to the neurotoxin 03 (Tx2) family. 06 subfamily.</text>
</comment>
<keyword id="KW-0903">Direct protein sequencing</keyword>
<keyword id="KW-1015">Disulfide bond</keyword>
<keyword id="KW-0872">Ion channel impairing toxin</keyword>
<keyword id="KW-0960">Knottin</keyword>
<keyword id="KW-0528">Neurotoxin</keyword>
<keyword id="KW-0964">Secreted</keyword>
<keyword id="KW-0732">Signal</keyword>
<keyword id="KW-0800">Toxin</keyword>
<keyword id="KW-0738">Voltage-gated sodium channel impairing toxin</keyword>
<proteinExistence type="evidence at protein level"/>
<reference key="1">
    <citation type="journal article" date="1998" name="Toxicon">
        <title>Cloning of cDNAS encoding neurotoxic peptides from the spider Phoneutria nigriventer.</title>
        <authorList>
            <person name="Kalapothakis E."/>
            <person name="Penaforte C.L."/>
            <person name="Beirao P.S.L."/>
            <person name="Romano-Silva M.A."/>
            <person name="Cruz J.S."/>
            <person name="Prado M.A.M."/>
            <person name="Guimaraes P.E.M."/>
            <person name="Gomez M.V."/>
            <person name="Prado V.F."/>
        </authorList>
    </citation>
    <scope>NUCLEOTIDE SEQUENCE [MRNA]</scope>
    <source>
        <tissue>Venom gland</tissue>
    </source>
</reference>
<reference key="2">
    <citation type="journal article" date="1992" name="FEBS Lett.">
        <title>The purification and amino acid sequences of four Tx2 neurotoxins from the venom of the Brazilian 'armed' spider Phoneutria nigriventer (Keys).</title>
        <authorList>
            <person name="Cordeiro M.N."/>
            <person name="Diniz C.R."/>
            <person name="Valentim A.D.C."/>
            <person name="von Eickstedt V.R.D."/>
            <person name="Gilroy J."/>
            <person name="Richardson M."/>
        </authorList>
    </citation>
    <scope>PROTEIN SEQUENCE OF 35-82</scope>
    <scope>FUNCTION</scope>
    <scope>SUBCELLULAR LOCATION</scope>
    <source>
        <tissue>Venom</tissue>
    </source>
</reference>
<reference key="3">
    <citation type="journal article" date="2009" name="Biochemistry">
        <title>Structure and activity analysis of two spider toxins that alter sodium channel inactivation kinetics.</title>
        <authorList>
            <person name="Matavel A."/>
            <person name="Fleury C."/>
            <person name="Oliveira L.C."/>
            <person name="Molina F."/>
            <person name="de Lima M.E."/>
            <person name="Cruz J.S."/>
            <person name="Cordeiro M.N."/>
            <person name="Richardson M."/>
            <person name="Ramos C.H."/>
            <person name="Beirao P.S."/>
        </authorList>
    </citation>
    <scope>PROTEIN SEQUENCE OF 35-82</scope>
    <scope>FUNCTION</scope>
    <scope>SUBCELLULAR LOCATION</scope>
    <scope>MASS SPECTROMETRY</scope>
    <source>
        <tissue>Venom</tissue>
    </source>
</reference>
<reference key="4">
    <citation type="journal article" date="2006" name="Comp. Biochem. Physiol.">
        <title>Comparison of the partial proteomes of the venoms of Brazilian spiders of the genus Phoneutria.</title>
        <authorList>
            <person name="Richardson M."/>
            <person name="Pimenta A.M."/>
            <person name="Bemquerer M.P."/>
            <person name="Santoro M.M."/>
            <person name="Beirao P.S."/>
            <person name="Lima M.E."/>
            <person name="Figueiredo S.G."/>
            <person name="Bloch C. Jr."/>
            <person name="Vasconcelos E.A."/>
            <person name="Campos F.A."/>
            <person name="Gomes P.C."/>
            <person name="Cordeiro M.N."/>
        </authorList>
    </citation>
    <scope>PROTEIN SEQUENCE OF 35-81</scope>
    <scope>SUBCELLULAR LOCATION</scope>
    <scope>MASS SPECTROMETRY</scope>
    <scope>BIOASSAY</scope>
    <source>
        <tissue>Venom</tissue>
    </source>
</reference>
<reference key="5">
    <citation type="journal article" date="1991" name="Toxicon">
        <title>Isolation of neurotoxic peptides from the venom of the 'armed' spider Phoneutria nigriventer.</title>
        <authorList>
            <person name="Rezende L. Jr."/>
            <person name="Cordeiro M.N."/>
            <person name="Oliveira E.B."/>
            <person name="Diniz C.R."/>
        </authorList>
    </citation>
    <scope>PROTEIN SEQUENCE OF 35-44</scope>
    <source>
        <tissue>Venom</tissue>
    </source>
</reference>
<reference key="6">
    <citation type="journal article" date="2004" name="Toxicon">
        <title>Blockade of neuronal nitric oxide synthase abolishes the toxic effects of Tx2-5, a lethal Phoneutria nigriventer spider toxin.</title>
        <authorList>
            <person name="Yonamine C.M."/>
            <person name="Troncone L.R."/>
            <person name="Camillo M.A."/>
        </authorList>
    </citation>
    <scope>PROTEIN SEQUENCE OF 35-39</scope>
    <scope>FUNCTION</scope>
    <scope>BIOASSAY</scope>
</reference>
<protein>
    <recommendedName>
        <fullName evidence="10">Delta-ctenitoxin-Pn2c</fullName>
        <shortName evidence="10">Delta-CNTX-Pn2c</shortName>
    </recommendedName>
    <alternativeName>
        <fullName evidence="9">Neurotoxin Pn2-5A</fullName>
    </alternativeName>
    <alternativeName>
        <fullName evidence="7 8 9">Neurotoxin Tx2-5</fullName>
        <shortName evidence="8">PnTx2-5</shortName>
    </alternativeName>
</protein>